<feature type="initiator methionine" description="Removed" evidence="1">
    <location>
        <position position="1"/>
    </location>
</feature>
<feature type="chain" id="PRO_0000428026" description="Adenosine kinase">
    <location>
        <begin position="2"/>
        <end position="324"/>
    </location>
</feature>
<feature type="active site" description="Proton acceptor" evidence="1">
    <location>
        <position position="257"/>
    </location>
</feature>
<feature type="binding site" description="in other chain" evidence="1">
    <location>
        <position position="8"/>
    </location>
    <ligand>
        <name>substrate</name>
        <note>ligand shared between dimeric partners</note>
    </ligand>
</feature>
<feature type="binding site" description="in other chain" evidence="1">
    <location>
        <position position="12"/>
    </location>
    <ligand>
        <name>substrate</name>
        <note>ligand shared between dimeric partners</note>
    </ligand>
</feature>
<feature type="binding site" evidence="1">
    <location>
        <position position="36"/>
    </location>
    <ligand>
        <name>substrate</name>
        <note>ligand shared between dimeric partners</note>
    </ligand>
</feature>
<feature type="binding site" description="in other chain" evidence="1">
    <location>
        <position position="48"/>
    </location>
    <ligand>
        <name>substrate</name>
        <note>ligand shared between dimeric partners</note>
    </ligand>
</feature>
<feature type="binding site" description="in other chain" evidence="1">
    <location>
        <position position="52"/>
    </location>
    <ligand>
        <name>substrate</name>
        <note>ligand shared between dimeric partners</note>
    </ligand>
</feature>
<feature type="binding site" description="in other chain" evidence="1">
    <location>
        <position position="102"/>
    </location>
    <ligand>
        <name>substrate</name>
        <note>ligand shared between dimeric partners</note>
    </ligand>
</feature>
<feature type="binding site" description="in other chain" evidence="1">
    <location>
        <position position="116"/>
    </location>
    <ligand>
        <name>substrate</name>
        <note>ligand shared between dimeric partners</note>
    </ligand>
</feature>
<feature type="binding site" description="in other chain" evidence="1">
    <location>
        <begin position="172"/>
        <end position="173"/>
    </location>
    <ligand>
        <name>substrate</name>
        <note>ligand shared between dimeric partners</note>
    </ligand>
</feature>
<feature type="binding site" evidence="1">
    <location>
        <position position="195"/>
    </location>
    <ligand>
        <name>ATP</name>
        <dbReference type="ChEBI" id="CHEBI:30616"/>
    </ligand>
</feature>
<feature type="binding site" evidence="1">
    <location>
        <begin position="223"/>
        <end position="228"/>
    </location>
    <ligand>
        <name>ATP</name>
        <dbReference type="ChEBI" id="CHEBI:30616"/>
    </ligand>
</feature>
<feature type="binding site" evidence="1">
    <location>
        <position position="256"/>
    </location>
    <ligand>
        <name>ATP</name>
        <dbReference type="ChEBI" id="CHEBI:30616"/>
    </ligand>
</feature>
<feature type="binding site" description="in other chain" evidence="1">
    <location>
        <position position="257"/>
    </location>
    <ligand>
        <name>substrate</name>
        <note>ligand shared between dimeric partners</note>
    </ligand>
</feature>
<accession>P9WID4</accession>
<accession>L0T8X3</accession>
<accession>P83734</accession>
<accession>Q10391</accession>
<protein>
    <recommendedName>
        <fullName evidence="1">Adenosine kinase</fullName>
        <shortName evidence="1">ADK</shortName>
        <shortName evidence="1">AK</shortName>
        <ecNumber evidence="1">2.7.1.20</ecNumber>
    </recommendedName>
</protein>
<reference key="1">
    <citation type="journal article" date="2002" name="J. Bacteriol.">
        <title>Whole-genome comparison of Mycobacterium tuberculosis clinical and laboratory strains.</title>
        <authorList>
            <person name="Fleischmann R.D."/>
            <person name="Alland D."/>
            <person name="Eisen J.A."/>
            <person name="Carpenter L."/>
            <person name="White O."/>
            <person name="Peterson J.D."/>
            <person name="DeBoy R.T."/>
            <person name="Dodson R.J."/>
            <person name="Gwinn M.L."/>
            <person name="Haft D.H."/>
            <person name="Hickey E.K."/>
            <person name="Kolonay J.F."/>
            <person name="Nelson W.C."/>
            <person name="Umayam L.A."/>
            <person name="Ermolaeva M.D."/>
            <person name="Salzberg S.L."/>
            <person name="Delcher A."/>
            <person name="Utterback T.R."/>
            <person name="Weidman J.F."/>
            <person name="Khouri H.M."/>
            <person name="Gill J."/>
            <person name="Mikula A."/>
            <person name="Bishai W."/>
            <person name="Jacobs W.R. Jr."/>
            <person name="Venter J.C."/>
            <person name="Fraser C.M."/>
        </authorList>
    </citation>
    <scope>NUCLEOTIDE SEQUENCE [LARGE SCALE GENOMIC DNA]</scope>
    <source>
        <strain>CDC 1551 / Oshkosh</strain>
    </source>
</reference>
<sequence length="324" mass="34472">MTIAVTGSIATDHLMRFPGRFSEQLLPEHLHKVSLSFLVDDLVMHRGGVAGNMAFAIGVLGGEVALVGAAGADFADYRDWLKARGVNCDHVLISETAHTARFTCTTDVDMAQIASFYPGAMSEARNIKLADVVSAIGKPELVIIGANDPEAMFLHTEECRKLGLAFAADPSQQLARLSGEEIRRLVNGAAYLFTNDYEWDLLLSKTGWSEADVMAQIDLRVTTLGPKGVDLVEPDGTTIHVGVVPETSQTDPTGVGDAFRAGFLTGRSAGLGLERSAQLGSLVAVLVLESTGTQEWQWDYEAAASRLAGAYGEHAAAEIVAVLA</sequence>
<comment type="function">
    <text evidence="1">Catalyzes the phosphorylation of adenosine to adenosine monophosphate (AMP). Can also catalyze the phosphorylation of the adenosine analog 2-methyladenosine (methyl-Ado) to methyl-AMP, the first step in the metabolism of this compound to an active form that displays antitubercular activity. Is not active on guanosine, inosine, deoxyadenosine, cytidine, uridine, or thymidine. Prefers dGTP and GTP to ATP as phosphate donors in vitro.</text>
</comment>
<comment type="catalytic activity">
    <reaction evidence="1">
        <text>adenosine + ATP = AMP + ADP + H(+)</text>
        <dbReference type="Rhea" id="RHEA:20824"/>
        <dbReference type="ChEBI" id="CHEBI:15378"/>
        <dbReference type="ChEBI" id="CHEBI:16335"/>
        <dbReference type="ChEBI" id="CHEBI:30616"/>
        <dbReference type="ChEBI" id="CHEBI:456215"/>
        <dbReference type="ChEBI" id="CHEBI:456216"/>
        <dbReference type="EC" id="2.7.1.20"/>
    </reaction>
</comment>
<comment type="catalytic activity">
    <reaction evidence="1">
        <text>adenosine + GTP = GDP + AMP + H(+)</text>
        <dbReference type="Rhea" id="RHEA:52532"/>
        <dbReference type="ChEBI" id="CHEBI:15378"/>
        <dbReference type="ChEBI" id="CHEBI:16335"/>
        <dbReference type="ChEBI" id="CHEBI:37565"/>
        <dbReference type="ChEBI" id="CHEBI:58189"/>
        <dbReference type="ChEBI" id="CHEBI:456215"/>
    </reaction>
</comment>
<comment type="catalytic activity">
    <reaction evidence="1">
        <text>dGTP + adenosine = dGDP + AMP + H(+)</text>
        <dbReference type="Rhea" id="RHEA:52536"/>
        <dbReference type="ChEBI" id="CHEBI:15378"/>
        <dbReference type="ChEBI" id="CHEBI:16335"/>
        <dbReference type="ChEBI" id="CHEBI:58595"/>
        <dbReference type="ChEBI" id="CHEBI:61429"/>
        <dbReference type="ChEBI" id="CHEBI:456215"/>
    </reaction>
</comment>
<comment type="cofactor">
    <cofactor evidence="1">
        <name>Mg(2+)</name>
        <dbReference type="ChEBI" id="CHEBI:18420"/>
    </cofactor>
</comment>
<comment type="activity regulation">
    <text evidence="1">The enzyme is subject to substrate inhibition by adenosine and is competitively inhibited by the adenosine analog iodotubercidin. Unlike other adenosine kinases it is not stimulated by inorganic phosphate. Activity is stimulated in the presence of potassium. Is inhibited by a series of 7-(het)aryl-7-deazaadenine ribonucleosides bearing small and bulky substituents in position 7; some of them display micromolar antimycobacterial activity and low cytotoxicity.</text>
</comment>
<comment type="pathway">
    <text evidence="1">Purine metabolism; AMP biosynthesis via salvage pathway; AMP from adenosine: step 1/1.</text>
</comment>
<comment type="subunit">
    <text evidence="1">Homodimer.</text>
</comment>
<comment type="similarity">
    <text evidence="2">Belongs to the carbohydrate kinase PfkB family.</text>
</comment>
<organism>
    <name type="scientific">Mycobacterium tuberculosis (strain CDC 1551 / Oshkosh)</name>
    <dbReference type="NCBI Taxonomy" id="83331"/>
    <lineage>
        <taxon>Bacteria</taxon>
        <taxon>Bacillati</taxon>
        <taxon>Actinomycetota</taxon>
        <taxon>Actinomycetes</taxon>
        <taxon>Mycobacteriales</taxon>
        <taxon>Mycobacteriaceae</taxon>
        <taxon>Mycobacterium</taxon>
        <taxon>Mycobacterium tuberculosis complex</taxon>
    </lineage>
</organism>
<dbReference type="EC" id="2.7.1.20" evidence="1"/>
<dbReference type="EMBL" id="AE000516">
    <property type="protein sequence ID" value="AAK46544.1"/>
    <property type="molecule type" value="Genomic_DNA"/>
</dbReference>
<dbReference type="PIR" id="C70785">
    <property type="entry name" value="C70785"/>
</dbReference>
<dbReference type="RefSeq" id="WP_003411414.1">
    <property type="nucleotide sequence ID" value="NZ_KK341227.1"/>
</dbReference>
<dbReference type="SMR" id="P9WID4"/>
<dbReference type="ChEMBL" id="CHEMBL4105883"/>
<dbReference type="KEGG" id="mtc:MT2258"/>
<dbReference type="PATRIC" id="fig|83331.31.peg.2433"/>
<dbReference type="HOGENOM" id="CLU_027634_5_2_11"/>
<dbReference type="UniPathway" id="UPA00588">
    <property type="reaction ID" value="UER00659"/>
</dbReference>
<dbReference type="Proteomes" id="UP000001020">
    <property type="component" value="Chromosome"/>
</dbReference>
<dbReference type="GO" id="GO:0004001">
    <property type="term" value="F:adenosine kinase activity"/>
    <property type="evidence" value="ECO:0007669"/>
    <property type="project" value="UniProtKB-EC"/>
</dbReference>
<dbReference type="GO" id="GO:0005524">
    <property type="term" value="F:ATP binding"/>
    <property type="evidence" value="ECO:0007669"/>
    <property type="project" value="UniProtKB-KW"/>
</dbReference>
<dbReference type="GO" id="GO:0044209">
    <property type="term" value="P:AMP salvage"/>
    <property type="evidence" value="ECO:0007669"/>
    <property type="project" value="UniProtKB-UniPathway"/>
</dbReference>
<dbReference type="GO" id="GO:0006166">
    <property type="term" value="P:purine ribonucleoside salvage"/>
    <property type="evidence" value="ECO:0007669"/>
    <property type="project" value="UniProtKB-KW"/>
</dbReference>
<dbReference type="CDD" id="cd01942">
    <property type="entry name" value="ribokinase_group_A"/>
    <property type="match status" value="1"/>
</dbReference>
<dbReference type="FunFam" id="3.40.1190.20:FF:000046">
    <property type="entry name" value="Adenosine kinase"/>
    <property type="match status" value="1"/>
</dbReference>
<dbReference type="Gene3D" id="3.40.1190.20">
    <property type="match status" value="1"/>
</dbReference>
<dbReference type="InterPro" id="IPR002173">
    <property type="entry name" value="Carboh/pur_kinase_PfkB_CS"/>
</dbReference>
<dbReference type="InterPro" id="IPR050306">
    <property type="entry name" value="PfkB_Carbo_kinase"/>
</dbReference>
<dbReference type="InterPro" id="IPR011611">
    <property type="entry name" value="PfkB_dom"/>
</dbReference>
<dbReference type="InterPro" id="IPR029056">
    <property type="entry name" value="Ribokinase-like"/>
</dbReference>
<dbReference type="PANTHER" id="PTHR43085:SF46">
    <property type="entry name" value="ADENOSINE KINASE"/>
    <property type="match status" value="1"/>
</dbReference>
<dbReference type="PANTHER" id="PTHR43085">
    <property type="entry name" value="HEXOKINASE FAMILY MEMBER"/>
    <property type="match status" value="1"/>
</dbReference>
<dbReference type="Pfam" id="PF00294">
    <property type="entry name" value="PfkB"/>
    <property type="match status" value="1"/>
</dbReference>
<dbReference type="SUPFAM" id="SSF53613">
    <property type="entry name" value="Ribokinase-like"/>
    <property type="match status" value="1"/>
</dbReference>
<dbReference type="PROSITE" id="PS00583">
    <property type="entry name" value="PFKB_KINASES_1"/>
    <property type="match status" value="1"/>
</dbReference>
<name>ADOK_MYCTO</name>
<keyword id="KW-0067">ATP-binding</keyword>
<keyword id="KW-0418">Kinase</keyword>
<keyword id="KW-0460">Magnesium</keyword>
<keyword id="KW-0547">Nucleotide-binding</keyword>
<keyword id="KW-0660">Purine salvage</keyword>
<keyword id="KW-1185">Reference proteome</keyword>
<keyword id="KW-0808">Transferase</keyword>
<evidence type="ECO:0000250" key="1">
    <source>
        <dbReference type="UniProtKB" id="P9WID5"/>
    </source>
</evidence>
<evidence type="ECO:0000305" key="2"/>
<proteinExistence type="inferred from homology"/>
<gene>
    <name type="primary">adoK</name>
    <name type="synonym">cbhK</name>
    <name type="ordered locus">MT2258</name>
</gene>